<proteinExistence type="evidence at protein level"/>
<accession>C0HLT6</accession>
<feature type="chain" id="PRO_0000452239" description="Bacteriocin IB45">
    <location>
        <begin position="1"/>
        <end position="10"/>
    </location>
</feature>
<feature type="unsure residue" evidence="1">
    <location>
        <position position="1"/>
    </location>
</feature>
<feature type="unsure residue" evidence="1">
    <location>
        <position position="6"/>
    </location>
</feature>
<feature type="non-terminal residue" evidence="3">
    <location>
        <position position="10"/>
    </location>
</feature>
<reference evidence="5" key="1">
    <citation type="thesis" date="2020" institute="University of Karachi" country="Pakistan">
        <title>Production, characterization and application of bacteriocin from indigenously isolated lactic acid bacteria.</title>
        <authorList>
            <person name="Fariha I."/>
        </authorList>
    </citation>
    <scope>PROTEIN SEQUENCE</scope>
    <scope>FUNCTION</scope>
    <scope>BIOPHYSICOCHEMICAL PROPERTIES</scope>
    <source>
        <strain evidence="3">KIBGE-IB45</strain>
    </source>
</reference>
<reference evidence="5" key="2">
    <citation type="journal article" date="2020" name="Int. J. Pept. Res. Ther.">
        <title>Characterization, cytotoxic analysis and action mechanism of antilisterial bacteriocin produced by Lactobacillus plantarum isolated from Cheddar cheese.</title>
        <authorList>
            <person name="Ibrahim F."/>
            <person name="Siddiqui N.N."/>
            <person name="Aman A."/>
            <person name="Qader S.A.U."/>
            <person name="Ansari A."/>
        </authorList>
    </citation>
    <scope>FUNCTION</scope>
    <scope>BIOPHYSICOCHEMICAL PROPERTIES</scope>
    <scope>DEVELOPMENTAL STAGE</scope>
    <source>
        <strain evidence="4">KIBGE-IB45</strain>
    </source>
</reference>
<comment type="function">
    <text evidence="1 2">Bacteriocin with a broad antibacterial spectrum against various Gram positive, Gram negative food borne and multidrug resistant pathogens, and against some fungal pathogenic strains (Ref.1, Ref.2). Displays bacteriocidal activity against L.monocytogenes ATCC 7644 (MIC=80 ug/ml), and inhibits the growth of M.luteus KIBGE-IB20 (MIC=160 ug/ml), P.aeruginosa ATCC 27,853 (MIC=80 ug/ml), S.aureus KIBGE-IB23 (MIC=160 ug/ml), B.cereus ATCC 11,778 (MIC=80 ug/ml), E.coli ATCC 8739 (MIC=80 ug/ml), E.faecalis ATCC 29,212 (MIC=40 ug/ml), A.terreus KIBGE-IB-35 (MIC=40 ug/ml) and A.flavus KIBGE-IB34 (MIC=20 ug/ml) (Ref.2). Has no activity against B.licheniformis KIBGE-IB3, A.niger KIBGE-IB-36 and A.fumigatus KIBGE-IB33 (Ref.2).</text>
</comment>
<comment type="biophysicochemical properties">
    <phDependence>
        <text evidence="1 2">Optimum pH is 6.5 (Ref.1, Ref.2). Retains 70% of its antibacterial activity at pH 8.0 and pH 5.5 (Ref.2).</text>
    </phDependence>
    <temperatureDependence>
        <text evidence="1 2">Optimum temperature is 35 degrees Celsius (Ref.1, Ref.2). Highly thermostable (Ref.2). Retains 60% of its antibacterial activity after heating to 100 degrees Celsius for 3 hrs (Ref.2). Stable during storage at -10 degrees Celsius and loses no activity during storage for 6 months (Ref.2).</text>
    </temperatureDependence>
</comment>
<comment type="developmental stage">
    <text evidence="2">Highest expression in the early stationary growth phase, with expression decreasing after the end of the stationary phase.</text>
</comment>
<protein>
    <recommendedName>
        <fullName evidence="4">Bacteriocin IB45</fullName>
        <shortName evidence="4">Bac-IB45</shortName>
    </recommendedName>
</protein>
<sequence length="10" mass="1067">XAPQNXMNGL</sequence>
<organism evidence="3">
    <name type="scientific">Lactiplantibacillus plantarum</name>
    <name type="common">Lactobacillus plantarum</name>
    <dbReference type="NCBI Taxonomy" id="1590"/>
    <lineage>
        <taxon>Bacteria</taxon>
        <taxon>Bacillati</taxon>
        <taxon>Bacillota</taxon>
        <taxon>Bacilli</taxon>
        <taxon>Lactobacillales</taxon>
        <taxon>Lactobacillaceae</taxon>
        <taxon>Lactiplantibacillus</taxon>
    </lineage>
</organism>
<name>BIB45_LACPN</name>
<keyword id="KW-0044">Antibiotic</keyword>
<keyword id="KW-0929">Antimicrobial</keyword>
<keyword id="KW-0903">Direct protein sequencing</keyword>
<keyword id="KW-0295">Fungicide</keyword>
<dbReference type="GO" id="GO:0050832">
    <property type="term" value="P:defense response to fungus"/>
    <property type="evidence" value="ECO:0000314"/>
    <property type="project" value="UniProtKB"/>
</dbReference>
<dbReference type="GO" id="GO:0050829">
    <property type="term" value="P:defense response to Gram-negative bacterium"/>
    <property type="evidence" value="ECO:0000314"/>
    <property type="project" value="UniProtKB"/>
</dbReference>
<dbReference type="GO" id="GO:0050830">
    <property type="term" value="P:defense response to Gram-positive bacterium"/>
    <property type="evidence" value="ECO:0000314"/>
    <property type="project" value="UniProtKB"/>
</dbReference>
<dbReference type="GO" id="GO:0031640">
    <property type="term" value="P:killing of cells of another organism"/>
    <property type="evidence" value="ECO:0007669"/>
    <property type="project" value="UniProtKB-KW"/>
</dbReference>
<evidence type="ECO:0000269" key="1">
    <source ref="1"/>
</evidence>
<evidence type="ECO:0000269" key="2">
    <source ref="2"/>
</evidence>
<evidence type="ECO:0000303" key="3">
    <source ref="1"/>
</evidence>
<evidence type="ECO:0000303" key="4">
    <source ref="2"/>
</evidence>
<evidence type="ECO:0000305" key="5"/>